<comment type="function">
    <text evidence="1">A key translational regulator that binds mRNA to regulate translation initiation and/or mRNA stability. Mediates global changes in gene expression, shifting from rapid growth to stress survival by linking envelope stress, the stringent response and the catabolite repression systems. Usually binds in the 5'-UTR; binding at or near the Shine-Dalgarno sequence prevents ribosome-binding, repressing translation, binding elsewhere in the 5'-UTR can activate translation and/or stabilize the mRNA. Its function is antagonized by small RNA(s).</text>
</comment>
<comment type="subunit">
    <text evidence="1">Homodimer; the beta-strands of each monomer intercalate to form a hydrophobic core, while the alpha-helices form wings that extend away from the core.</text>
</comment>
<comment type="subcellular location">
    <subcellularLocation>
        <location evidence="1">Cytoplasm</location>
    </subcellularLocation>
</comment>
<comment type="similarity">
    <text evidence="1">Belongs to the CsrA/RsmA family.</text>
</comment>
<name>CSRA_CROS8</name>
<sequence length="61" mass="6856">MLILTRRVGETLMIGDEVTVTVLGVKGNQVRIGVNAPKEVSVHREEIYQRIQAEKSQQSSY</sequence>
<reference key="1">
    <citation type="journal article" date="2010" name="PLoS ONE">
        <title>Genome sequence of Cronobacter sakazakii BAA-894 and comparative genomic hybridization analysis with other Cronobacter species.</title>
        <authorList>
            <person name="Kucerova E."/>
            <person name="Clifton S.W."/>
            <person name="Xia X.Q."/>
            <person name="Long F."/>
            <person name="Porwollik S."/>
            <person name="Fulton L."/>
            <person name="Fronick C."/>
            <person name="Minx P."/>
            <person name="Kyung K."/>
            <person name="Warren W."/>
            <person name="Fulton R."/>
            <person name="Feng D."/>
            <person name="Wollam A."/>
            <person name="Shah N."/>
            <person name="Bhonagiri V."/>
            <person name="Nash W.E."/>
            <person name="Hallsworth-Pepin K."/>
            <person name="Wilson R.K."/>
            <person name="McClelland M."/>
            <person name="Forsythe S.J."/>
        </authorList>
    </citation>
    <scope>NUCLEOTIDE SEQUENCE [LARGE SCALE GENOMIC DNA]</scope>
    <source>
        <strain>ATCC BAA-894</strain>
    </source>
</reference>
<organism>
    <name type="scientific">Cronobacter sakazakii (strain ATCC BAA-894)</name>
    <name type="common">Enterobacter sakazakii</name>
    <dbReference type="NCBI Taxonomy" id="290339"/>
    <lineage>
        <taxon>Bacteria</taxon>
        <taxon>Pseudomonadati</taxon>
        <taxon>Pseudomonadota</taxon>
        <taxon>Gammaproteobacteria</taxon>
        <taxon>Enterobacterales</taxon>
        <taxon>Enterobacteriaceae</taxon>
        <taxon>Cronobacter</taxon>
    </lineage>
</organism>
<dbReference type="EMBL" id="CP000783">
    <property type="protein sequence ID" value="ABU75861.1"/>
    <property type="molecule type" value="Genomic_DNA"/>
</dbReference>
<dbReference type="RefSeq" id="WP_000906486.1">
    <property type="nucleotide sequence ID" value="NC_009778.1"/>
</dbReference>
<dbReference type="BMRB" id="A7MJ32"/>
<dbReference type="SMR" id="A7MJ32"/>
<dbReference type="GeneID" id="98389839"/>
<dbReference type="KEGG" id="esa:ESA_00571"/>
<dbReference type="HOGENOM" id="CLU_164837_2_1_6"/>
<dbReference type="Proteomes" id="UP000000260">
    <property type="component" value="Chromosome"/>
</dbReference>
<dbReference type="GO" id="GO:0005829">
    <property type="term" value="C:cytosol"/>
    <property type="evidence" value="ECO:0007669"/>
    <property type="project" value="TreeGrafter"/>
</dbReference>
<dbReference type="GO" id="GO:0048027">
    <property type="term" value="F:mRNA 5'-UTR binding"/>
    <property type="evidence" value="ECO:0007669"/>
    <property type="project" value="UniProtKB-UniRule"/>
</dbReference>
<dbReference type="GO" id="GO:0006402">
    <property type="term" value="P:mRNA catabolic process"/>
    <property type="evidence" value="ECO:0007669"/>
    <property type="project" value="InterPro"/>
</dbReference>
<dbReference type="GO" id="GO:0045947">
    <property type="term" value="P:negative regulation of translational initiation"/>
    <property type="evidence" value="ECO:0007669"/>
    <property type="project" value="UniProtKB-UniRule"/>
</dbReference>
<dbReference type="GO" id="GO:0045948">
    <property type="term" value="P:positive regulation of translational initiation"/>
    <property type="evidence" value="ECO:0007669"/>
    <property type="project" value="UniProtKB-UniRule"/>
</dbReference>
<dbReference type="GO" id="GO:0006109">
    <property type="term" value="P:regulation of carbohydrate metabolic process"/>
    <property type="evidence" value="ECO:0007669"/>
    <property type="project" value="UniProtKB-UniRule"/>
</dbReference>
<dbReference type="FunFam" id="2.60.40.4380:FF:000001">
    <property type="entry name" value="Translational regulator CsrA"/>
    <property type="match status" value="1"/>
</dbReference>
<dbReference type="Gene3D" id="2.60.40.4380">
    <property type="entry name" value="Translational regulator CsrA"/>
    <property type="match status" value="1"/>
</dbReference>
<dbReference type="HAMAP" id="MF_00167">
    <property type="entry name" value="CsrA"/>
    <property type="match status" value="1"/>
</dbReference>
<dbReference type="InterPro" id="IPR003751">
    <property type="entry name" value="CsrA"/>
</dbReference>
<dbReference type="InterPro" id="IPR036107">
    <property type="entry name" value="CsrA_sf"/>
</dbReference>
<dbReference type="NCBIfam" id="TIGR00202">
    <property type="entry name" value="csrA"/>
    <property type="match status" value="1"/>
</dbReference>
<dbReference type="NCBIfam" id="NF002469">
    <property type="entry name" value="PRK01712.1"/>
    <property type="match status" value="1"/>
</dbReference>
<dbReference type="PANTHER" id="PTHR34984">
    <property type="entry name" value="CARBON STORAGE REGULATOR"/>
    <property type="match status" value="1"/>
</dbReference>
<dbReference type="PANTHER" id="PTHR34984:SF1">
    <property type="entry name" value="CARBON STORAGE REGULATOR"/>
    <property type="match status" value="1"/>
</dbReference>
<dbReference type="Pfam" id="PF02599">
    <property type="entry name" value="CsrA"/>
    <property type="match status" value="1"/>
</dbReference>
<dbReference type="SUPFAM" id="SSF117130">
    <property type="entry name" value="CsrA-like"/>
    <property type="match status" value="1"/>
</dbReference>
<proteinExistence type="inferred from homology"/>
<keyword id="KW-0010">Activator</keyword>
<keyword id="KW-0963">Cytoplasm</keyword>
<keyword id="KW-1185">Reference proteome</keyword>
<keyword id="KW-0678">Repressor</keyword>
<keyword id="KW-0694">RNA-binding</keyword>
<keyword id="KW-0810">Translation regulation</keyword>
<protein>
    <recommendedName>
        <fullName evidence="1">Translational regulator CsrA</fullName>
    </recommendedName>
    <alternativeName>
        <fullName evidence="1">Carbon storage regulator</fullName>
    </alternativeName>
</protein>
<gene>
    <name evidence="1" type="primary">csrA</name>
    <name type="ordered locus">ESA_00571</name>
</gene>
<feature type="chain" id="PRO_1000023382" description="Translational regulator CsrA">
    <location>
        <begin position="1"/>
        <end position="61"/>
    </location>
</feature>
<evidence type="ECO:0000255" key="1">
    <source>
        <dbReference type="HAMAP-Rule" id="MF_00167"/>
    </source>
</evidence>
<accession>A7MJ32</accession>